<comment type="function">
    <text evidence="1">One of the primary rRNA binding proteins, it binds directly near the 3'-end of the 23S rRNA, where it nucleates assembly of the 50S subunit.</text>
</comment>
<comment type="subunit">
    <text evidence="1">Part of the 50S ribosomal subunit. Forms a cluster with proteins L14 and L19.</text>
</comment>
<comment type="PTM">
    <text evidence="1">Methylated by PrmB.</text>
</comment>
<comment type="similarity">
    <text evidence="1">Belongs to the universal ribosomal protein uL3 family.</text>
</comment>
<gene>
    <name evidence="1" type="primary">rplC</name>
    <name type="ordered locus">NGO_1838</name>
</gene>
<sequence length="214" mass="22678">MTLGLVGRKVGMTRVFDEQGVSVPVTVLDMSANRVTQVKSKDTDGYTAVQVTFGQKKANRVNKAEAGHFAKAGVEAGRGLIEFALTEEKLAELKAGDEITVSMFEVGQLVDVTGTSKGKGFSGTIKRHNFGAQRTSHGNSRSHRVPGSIGMAQDPGRVFPGKRMAGQYGNTKATVQKLEVVRVDAERQLLLVKGAVPGAVNSDVVVRPSVKVGA</sequence>
<dbReference type="EMBL" id="AE004969">
    <property type="protein sequence ID" value="AAW90460.1"/>
    <property type="molecule type" value="Genomic_DNA"/>
</dbReference>
<dbReference type="RefSeq" id="WP_002215400.1">
    <property type="nucleotide sequence ID" value="NC_002946.2"/>
</dbReference>
<dbReference type="RefSeq" id="YP_208872.1">
    <property type="nucleotide sequence ID" value="NC_002946.2"/>
</dbReference>
<dbReference type="SMR" id="Q5F5S7"/>
<dbReference type="STRING" id="242231.NGO_1838"/>
<dbReference type="GeneID" id="93387217"/>
<dbReference type="KEGG" id="ngo:NGO_1838"/>
<dbReference type="PATRIC" id="fig|242231.10.peg.2209"/>
<dbReference type="HOGENOM" id="CLU_044142_4_1_4"/>
<dbReference type="Proteomes" id="UP000000535">
    <property type="component" value="Chromosome"/>
</dbReference>
<dbReference type="GO" id="GO:0022625">
    <property type="term" value="C:cytosolic large ribosomal subunit"/>
    <property type="evidence" value="ECO:0007669"/>
    <property type="project" value="TreeGrafter"/>
</dbReference>
<dbReference type="GO" id="GO:0019843">
    <property type="term" value="F:rRNA binding"/>
    <property type="evidence" value="ECO:0007669"/>
    <property type="project" value="UniProtKB-UniRule"/>
</dbReference>
<dbReference type="GO" id="GO:0003735">
    <property type="term" value="F:structural constituent of ribosome"/>
    <property type="evidence" value="ECO:0007669"/>
    <property type="project" value="InterPro"/>
</dbReference>
<dbReference type="GO" id="GO:0006412">
    <property type="term" value="P:translation"/>
    <property type="evidence" value="ECO:0007669"/>
    <property type="project" value="UniProtKB-UniRule"/>
</dbReference>
<dbReference type="FunFam" id="2.40.30.10:FF:000004">
    <property type="entry name" value="50S ribosomal protein L3"/>
    <property type="match status" value="1"/>
</dbReference>
<dbReference type="FunFam" id="3.30.160.810:FF:000001">
    <property type="entry name" value="50S ribosomal protein L3"/>
    <property type="match status" value="1"/>
</dbReference>
<dbReference type="Gene3D" id="3.30.160.810">
    <property type="match status" value="1"/>
</dbReference>
<dbReference type="Gene3D" id="2.40.30.10">
    <property type="entry name" value="Translation factors"/>
    <property type="match status" value="1"/>
</dbReference>
<dbReference type="HAMAP" id="MF_01325_B">
    <property type="entry name" value="Ribosomal_uL3_B"/>
    <property type="match status" value="1"/>
</dbReference>
<dbReference type="InterPro" id="IPR000597">
    <property type="entry name" value="Ribosomal_uL3"/>
</dbReference>
<dbReference type="InterPro" id="IPR019927">
    <property type="entry name" value="Ribosomal_uL3_bac/org-type"/>
</dbReference>
<dbReference type="InterPro" id="IPR019926">
    <property type="entry name" value="Ribosomal_uL3_CS"/>
</dbReference>
<dbReference type="InterPro" id="IPR009000">
    <property type="entry name" value="Transl_B-barrel_sf"/>
</dbReference>
<dbReference type="NCBIfam" id="TIGR03625">
    <property type="entry name" value="L3_bact"/>
    <property type="match status" value="1"/>
</dbReference>
<dbReference type="PANTHER" id="PTHR11229">
    <property type="entry name" value="50S RIBOSOMAL PROTEIN L3"/>
    <property type="match status" value="1"/>
</dbReference>
<dbReference type="PANTHER" id="PTHR11229:SF16">
    <property type="entry name" value="LARGE RIBOSOMAL SUBUNIT PROTEIN UL3C"/>
    <property type="match status" value="1"/>
</dbReference>
<dbReference type="Pfam" id="PF00297">
    <property type="entry name" value="Ribosomal_L3"/>
    <property type="match status" value="1"/>
</dbReference>
<dbReference type="SUPFAM" id="SSF50447">
    <property type="entry name" value="Translation proteins"/>
    <property type="match status" value="1"/>
</dbReference>
<dbReference type="PROSITE" id="PS00474">
    <property type="entry name" value="RIBOSOMAL_L3"/>
    <property type="match status" value="1"/>
</dbReference>
<keyword id="KW-0488">Methylation</keyword>
<keyword id="KW-1185">Reference proteome</keyword>
<keyword id="KW-0687">Ribonucleoprotein</keyword>
<keyword id="KW-0689">Ribosomal protein</keyword>
<keyword id="KW-0694">RNA-binding</keyword>
<keyword id="KW-0699">rRNA-binding</keyword>
<feature type="chain" id="PRO_0000241374" description="Large ribosomal subunit protein uL3">
    <location>
        <begin position="1"/>
        <end position="214"/>
    </location>
</feature>
<feature type="region of interest" description="Disordered" evidence="2">
    <location>
        <begin position="131"/>
        <end position="155"/>
    </location>
</feature>
<feature type="modified residue" description="N5-methylglutamine" evidence="1">
    <location>
        <position position="153"/>
    </location>
</feature>
<name>RL3_NEIG1</name>
<protein>
    <recommendedName>
        <fullName evidence="1">Large ribosomal subunit protein uL3</fullName>
    </recommendedName>
    <alternativeName>
        <fullName evidence="3">50S ribosomal protein L3</fullName>
    </alternativeName>
</protein>
<proteinExistence type="inferred from homology"/>
<organism>
    <name type="scientific">Neisseria gonorrhoeae (strain ATCC 700825 / FA 1090)</name>
    <dbReference type="NCBI Taxonomy" id="242231"/>
    <lineage>
        <taxon>Bacteria</taxon>
        <taxon>Pseudomonadati</taxon>
        <taxon>Pseudomonadota</taxon>
        <taxon>Betaproteobacteria</taxon>
        <taxon>Neisseriales</taxon>
        <taxon>Neisseriaceae</taxon>
        <taxon>Neisseria</taxon>
    </lineage>
</organism>
<evidence type="ECO:0000255" key="1">
    <source>
        <dbReference type="HAMAP-Rule" id="MF_01325"/>
    </source>
</evidence>
<evidence type="ECO:0000256" key="2">
    <source>
        <dbReference type="SAM" id="MobiDB-lite"/>
    </source>
</evidence>
<evidence type="ECO:0000305" key="3"/>
<reference key="1">
    <citation type="submission" date="2003-03" db="EMBL/GenBank/DDBJ databases">
        <title>The complete genome sequence of Neisseria gonorrhoeae.</title>
        <authorList>
            <person name="Lewis L.A."/>
            <person name="Gillaspy A.F."/>
            <person name="McLaughlin R.E."/>
            <person name="Gipson M."/>
            <person name="Ducey T.F."/>
            <person name="Ownbey T."/>
            <person name="Hartman K."/>
            <person name="Nydick C."/>
            <person name="Carson M.B."/>
            <person name="Vaughn J."/>
            <person name="Thomson C."/>
            <person name="Song L."/>
            <person name="Lin S."/>
            <person name="Yuan X."/>
            <person name="Najar F."/>
            <person name="Zhan M."/>
            <person name="Ren Q."/>
            <person name="Zhu H."/>
            <person name="Qi S."/>
            <person name="Kenton S.M."/>
            <person name="Lai H."/>
            <person name="White J.D."/>
            <person name="Clifton S."/>
            <person name="Roe B.A."/>
            <person name="Dyer D.W."/>
        </authorList>
    </citation>
    <scope>NUCLEOTIDE SEQUENCE [LARGE SCALE GENOMIC DNA]</scope>
    <source>
        <strain>ATCC 700825 / FA 1090</strain>
    </source>
</reference>
<accession>Q5F5S7</accession>